<accession>P34456</accession>
<reference key="1">
    <citation type="journal article" date="1994" name="Nature">
        <title>2.2 Mb of contiguous nucleotide sequence from chromosome III of C. elegans.</title>
        <authorList>
            <person name="Wilson R."/>
            <person name="Ainscough R."/>
            <person name="Anderson K."/>
            <person name="Baynes C."/>
            <person name="Berks M."/>
            <person name="Bonfield J."/>
            <person name="Burton J."/>
            <person name="Connell M."/>
            <person name="Copsey T."/>
            <person name="Cooper J."/>
            <person name="Coulson A."/>
            <person name="Craxton M."/>
            <person name="Dear S."/>
            <person name="Du Z."/>
            <person name="Durbin R."/>
            <person name="Favello A."/>
            <person name="Fraser A."/>
            <person name="Fulton L."/>
            <person name="Gardner A."/>
            <person name="Green P."/>
            <person name="Hawkins T."/>
            <person name="Hillier L."/>
            <person name="Jier M."/>
            <person name="Johnston L."/>
            <person name="Jones M."/>
            <person name="Kershaw J."/>
            <person name="Kirsten J."/>
            <person name="Laisster N."/>
            <person name="Latreille P."/>
            <person name="Lightning J."/>
            <person name="Lloyd C."/>
            <person name="Mortimore B."/>
            <person name="O'Callaghan M."/>
            <person name="Parsons J."/>
            <person name="Percy C."/>
            <person name="Rifken L."/>
            <person name="Roopra A."/>
            <person name="Saunders D."/>
            <person name="Shownkeen R."/>
            <person name="Sims M."/>
            <person name="Smaldon N."/>
            <person name="Smith A."/>
            <person name="Smith M."/>
            <person name="Sonnhammer E."/>
            <person name="Staden R."/>
            <person name="Sulston J."/>
            <person name="Thierry-Mieg J."/>
            <person name="Thomas K."/>
            <person name="Vaudin M."/>
            <person name="Vaughan K."/>
            <person name="Waterston R."/>
            <person name="Watson A."/>
            <person name="Weinstock L."/>
            <person name="Wilkinson-Sproat J."/>
            <person name="Wohldman P."/>
        </authorList>
    </citation>
    <scope>NUCLEOTIDE SEQUENCE [LARGE SCALE GENOMIC DNA]</scope>
    <source>
        <strain>Bristol N2</strain>
    </source>
</reference>
<reference key="2">
    <citation type="journal article" date="1998" name="Science">
        <title>Genome sequence of the nematode C. elegans: a platform for investigating biology.</title>
        <authorList>
            <consortium name="The C. elegans sequencing consortium"/>
        </authorList>
    </citation>
    <scope>NUCLEOTIDE SEQUENCE [LARGE SCALE GENOMIC DNA]</scope>
    <source>
        <strain>Bristol N2</strain>
    </source>
</reference>
<keyword id="KW-1185">Reference proteome</keyword>
<dbReference type="EMBL" id="FO080401">
    <property type="protein sequence ID" value="CCD63457.1"/>
    <property type="molecule type" value="Genomic_DNA"/>
</dbReference>
<dbReference type="RefSeq" id="NP_498735.1">
    <property type="nucleotide sequence ID" value="NM_066334.1"/>
</dbReference>
<dbReference type="FunCoup" id="P34456">
    <property type="interactions" value="8"/>
</dbReference>
<dbReference type="STRING" id="6239.F54H12.2.1"/>
<dbReference type="PaxDb" id="6239-F54H12.2"/>
<dbReference type="EnsemblMetazoa" id="F54H12.2.1">
    <property type="protein sequence ID" value="F54H12.2.1"/>
    <property type="gene ID" value="WBGene00018842"/>
</dbReference>
<dbReference type="GeneID" id="186266"/>
<dbReference type="KEGG" id="cel:CELE_F54H12.2"/>
<dbReference type="UCSC" id="F54H12.2">
    <property type="organism name" value="c. elegans"/>
</dbReference>
<dbReference type="AGR" id="WB:WBGene00018842"/>
<dbReference type="CTD" id="186266"/>
<dbReference type="WormBase" id="F54H12.2">
    <property type="protein sequence ID" value="CE00515"/>
    <property type="gene ID" value="WBGene00018842"/>
</dbReference>
<dbReference type="eggNOG" id="ENOG502R501">
    <property type="taxonomic scope" value="Eukaryota"/>
</dbReference>
<dbReference type="GeneTree" id="ENSGT01060000250334"/>
<dbReference type="HOGENOM" id="CLU_021119_0_0_1"/>
<dbReference type="InParanoid" id="P34456"/>
<dbReference type="OMA" id="QMSITSH"/>
<dbReference type="OrthoDB" id="5870771at2759"/>
<dbReference type="PhylomeDB" id="P34456"/>
<dbReference type="PRO" id="PR:P34456"/>
<dbReference type="Proteomes" id="UP000001940">
    <property type="component" value="Chromosome III"/>
</dbReference>
<dbReference type="Bgee" id="WBGene00018842">
    <property type="expression patterns" value="Expressed in adult organism"/>
</dbReference>
<dbReference type="GO" id="GO:0005829">
    <property type="term" value="C:cytosol"/>
    <property type="evidence" value="ECO:0000318"/>
    <property type="project" value="GO_Central"/>
</dbReference>
<dbReference type="GO" id="GO:0004748">
    <property type="term" value="F:ribonucleoside-diphosphate reductase activity, thioredoxin disulfide as acceptor"/>
    <property type="evidence" value="ECO:0000318"/>
    <property type="project" value="GO_Central"/>
</dbReference>
<dbReference type="GO" id="GO:0009263">
    <property type="term" value="P:deoxyribonucleotide biosynthetic process"/>
    <property type="evidence" value="ECO:0000318"/>
    <property type="project" value="GO_Central"/>
</dbReference>
<dbReference type="InterPro" id="IPR000358">
    <property type="entry name" value="RNR_small_fam"/>
</dbReference>
<dbReference type="PANTHER" id="PTHR23409:SF21">
    <property type="entry name" value="CAPSID PROTEIN"/>
    <property type="match status" value="1"/>
</dbReference>
<dbReference type="PANTHER" id="PTHR23409">
    <property type="entry name" value="RIBONUCLEOSIDE-DIPHOSPHATE REDUCTASE SMALL CHAIN"/>
    <property type="match status" value="1"/>
</dbReference>
<feature type="chain" id="PRO_0000065366" description="Uncharacterized protein F54H12.2">
    <location>
        <begin position="1"/>
        <end position="419"/>
    </location>
</feature>
<sequence>MPGTQTCIQNSRWTVVNLKNAFQAEGPWEFVLGNNSRSYLNLKRTYLVYTFNITDQNGAIVNIPNPITKDSLVYAPINNIAHSIVKNFSLHINSQLAYHNSSNYAYKAYFENALMYGKEIKNSTLTAAGYFHEDEIGTPTSKGFLNRCGTGTTQVAANISLDLMNQPRVLLNSCNVKLTAYPNNSEFLIEAYNHGQQKFKFNVTDVYALVNEFDLTDGLSNELEAAIIEHKMIQYPMISSQVRSFYIDGGRFDAPANTLFTSKMPRRLFLGLVSSEAYNGSFGTTPFNFKPYGVTDVHIDYCGQTIPGRPMNLDFENNKFVEAYVQLQETLGHTRNNFSCNSIDIGMFRSKGYTIFGFELSPVAQDNNLFELVRQTNVSVRLNFKKETPPGGLYCVVYAEFDQIFSLDFMRNPIVDSIV</sequence>
<proteinExistence type="predicted"/>
<organism>
    <name type="scientific">Caenorhabditis elegans</name>
    <dbReference type="NCBI Taxonomy" id="6239"/>
    <lineage>
        <taxon>Eukaryota</taxon>
        <taxon>Metazoa</taxon>
        <taxon>Ecdysozoa</taxon>
        <taxon>Nematoda</taxon>
        <taxon>Chromadorea</taxon>
        <taxon>Rhabditida</taxon>
        <taxon>Rhabditina</taxon>
        <taxon>Rhabditomorpha</taxon>
        <taxon>Rhabditoidea</taxon>
        <taxon>Rhabditidae</taxon>
        <taxon>Peloderinae</taxon>
        <taxon>Caenorhabditis</taxon>
    </lineage>
</organism>
<protein>
    <recommendedName>
        <fullName>Uncharacterized protein F54H12.2</fullName>
    </recommendedName>
</protein>
<gene>
    <name type="ORF">F54H12.2</name>
</gene>
<name>YMD2_CAEEL</name>